<gene>
    <name evidence="1" type="primary">ccsA</name>
</gene>
<keyword id="KW-0150">Chloroplast</keyword>
<keyword id="KW-0201">Cytochrome c-type biogenesis</keyword>
<keyword id="KW-0472">Membrane</keyword>
<keyword id="KW-0934">Plastid</keyword>
<keyword id="KW-0793">Thylakoid</keyword>
<keyword id="KW-0812">Transmembrane</keyword>
<keyword id="KW-1133">Transmembrane helix</keyword>
<sequence length="321" mass="36592">MIFLTLEHIFTHISFSIVSIVITIHLMTLLVDGIVGLYDSSEKGMIATFLCITGFLVTRWIYSRHFPLSDLYESLIFLSWSFSIIHMVPKIRNHKNHLSAITAPSAIFTQGFATSGLLTEMHQSAILVPALQSQWLMMHVSMMVLSYAALLCGSLLSIALLVIRFRKNIEIFGKDNYLLIGSFSFGESQYVNERSNILRNTSFLSFRNYYRYQLIQQLDHWSYRVISLGFIFLTIGILSGAVWANEAWGAYWNWDPKETWAFITWTIFAIYLHTRTNKDLQGANSAIVASIGFLIIWICYFGVNLLGIGLHSYGSFTLTSN</sequence>
<accession>Q09FZ7</accession>
<feature type="chain" id="PRO_0000353786" description="Cytochrome c biogenesis protein CcsA">
    <location>
        <begin position="1"/>
        <end position="321"/>
    </location>
</feature>
<feature type="transmembrane region" description="Helical" evidence="1">
    <location>
        <begin position="17"/>
        <end position="37"/>
    </location>
</feature>
<feature type="transmembrane region" description="Helical" evidence="1">
    <location>
        <begin position="43"/>
        <end position="63"/>
    </location>
</feature>
<feature type="transmembrane region" description="Helical" evidence="1">
    <location>
        <begin position="71"/>
        <end position="91"/>
    </location>
</feature>
<feature type="transmembrane region" description="Helical" evidence="1">
    <location>
        <begin position="98"/>
        <end position="118"/>
    </location>
</feature>
<feature type="transmembrane region" description="Helical" evidence="1">
    <location>
        <begin position="143"/>
        <end position="163"/>
    </location>
</feature>
<feature type="transmembrane region" description="Helical" evidence="1">
    <location>
        <begin position="225"/>
        <end position="245"/>
    </location>
</feature>
<feature type="transmembrane region" description="Helical" evidence="1">
    <location>
        <begin position="258"/>
        <end position="275"/>
    </location>
</feature>
<feature type="transmembrane region" description="Helical" evidence="1">
    <location>
        <begin position="286"/>
        <end position="306"/>
    </location>
</feature>
<protein>
    <recommendedName>
        <fullName evidence="1">Cytochrome c biogenesis protein CcsA</fullName>
    </recommendedName>
</protein>
<reference key="1">
    <citation type="journal article" date="2006" name="BMC Plant Biol.">
        <title>Rapid and accurate pyrosequencing of angiosperm plastid genomes.</title>
        <authorList>
            <person name="Moore M.J."/>
            <person name="Dhingra A."/>
            <person name="Soltis P.S."/>
            <person name="Shaw R."/>
            <person name="Farmerie W.G."/>
            <person name="Folta K.M."/>
            <person name="Soltis D.E."/>
        </authorList>
    </citation>
    <scope>NUCLEOTIDE SEQUENCE [LARGE SCALE GENOMIC DNA]</scope>
</reference>
<comment type="function">
    <text evidence="1">Required during biogenesis of c-type cytochromes (cytochrome c6 and cytochrome f) at the step of heme attachment.</text>
</comment>
<comment type="subunit">
    <text evidence="1">May interact with Ccs1.</text>
</comment>
<comment type="subcellular location">
    <subcellularLocation>
        <location evidence="1">Plastid</location>
        <location evidence="1">Chloroplast thylakoid membrane</location>
        <topology evidence="1">Multi-pass membrane protein</topology>
    </subcellularLocation>
</comment>
<comment type="similarity">
    <text evidence="1">Belongs to the CcmF/CycK/Ccl1/NrfE/CcsA family.</text>
</comment>
<organism>
    <name type="scientific">Platanus occidentalis</name>
    <name type="common">Sycamore</name>
    <name type="synonym">American plane tree</name>
    <dbReference type="NCBI Taxonomy" id="4403"/>
    <lineage>
        <taxon>Eukaryota</taxon>
        <taxon>Viridiplantae</taxon>
        <taxon>Streptophyta</taxon>
        <taxon>Embryophyta</taxon>
        <taxon>Tracheophyta</taxon>
        <taxon>Spermatophyta</taxon>
        <taxon>Magnoliopsida</taxon>
        <taxon>Proteales</taxon>
        <taxon>Platanaceae</taxon>
        <taxon>Platanus</taxon>
    </lineage>
</organism>
<proteinExistence type="inferred from homology"/>
<dbReference type="EMBL" id="DQ923116">
    <property type="protein sequence ID" value="ABI49828.1"/>
    <property type="molecule type" value="Genomic_DNA"/>
</dbReference>
<dbReference type="RefSeq" id="YP_740614.1">
    <property type="nucleotide sequence ID" value="NC_008335.1"/>
</dbReference>
<dbReference type="SMR" id="Q09FZ7"/>
<dbReference type="GeneID" id="4271353"/>
<dbReference type="GO" id="GO:0009535">
    <property type="term" value="C:chloroplast thylakoid membrane"/>
    <property type="evidence" value="ECO:0007669"/>
    <property type="project" value="UniProtKB-SubCell"/>
</dbReference>
<dbReference type="GO" id="GO:0005886">
    <property type="term" value="C:plasma membrane"/>
    <property type="evidence" value="ECO:0007669"/>
    <property type="project" value="TreeGrafter"/>
</dbReference>
<dbReference type="GO" id="GO:0020037">
    <property type="term" value="F:heme binding"/>
    <property type="evidence" value="ECO:0007669"/>
    <property type="project" value="InterPro"/>
</dbReference>
<dbReference type="GO" id="GO:0017004">
    <property type="term" value="P:cytochrome complex assembly"/>
    <property type="evidence" value="ECO:0007669"/>
    <property type="project" value="UniProtKB-UniRule"/>
</dbReference>
<dbReference type="HAMAP" id="MF_01391">
    <property type="entry name" value="CytC_CcsA"/>
    <property type="match status" value="1"/>
</dbReference>
<dbReference type="InterPro" id="IPR002541">
    <property type="entry name" value="Cyt_c_assembly"/>
</dbReference>
<dbReference type="InterPro" id="IPR017562">
    <property type="entry name" value="Cyt_c_biogenesis_CcsA"/>
</dbReference>
<dbReference type="InterPro" id="IPR045062">
    <property type="entry name" value="Cyt_c_biogenesis_CcsA/CcmC"/>
</dbReference>
<dbReference type="NCBIfam" id="TIGR03144">
    <property type="entry name" value="cytochr_II_ccsB"/>
    <property type="match status" value="1"/>
</dbReference>
<dbReference type="PANTHER" id="PTHR30071:SF1">
    <property type="entry name" value="CYTOCHROME B_B6 PROTEIN-RELATED"/>
    <property type="match status" value="1"/>
</dbReference>
<dbReference type="PANTHER" id="PTHR30071">
    <property type="entry name" value="HEME EXPORTER PROTEIN C"/>
    <property type="match status" value="1"/>
</dbReference>
<dbReference type="Pfam" id="PF01578">
    <property type="entry name" value="Cytochrom_C_asm"/>
    <property type="match status" value="1"/>
</dbReference>
<geneLocation type="chloroplast"/>
<evidence type="ECO:0000255" key="1">
    <source>
        <dbReference type="HAMAP-Rule" id="MF_01391"/>
    </source>
</evidence>
<name>CCSA_PLAOC</name>